<keyword id="KW-0067">ATP-binding</keyword>
<keyword id="KW-0418">Kinase</keyword>
<keyword id="KW-0547">Nucleotide-binding</keyword>
<keyword id="KW-0723">Serine/threonine-protein kinase</keyword>
<keyword id="KW-0749">Sporulation</keyword>
<keyword id="KW-0808">Transferase</keyword>
<comment type="function">
    <text evidence="1">Binds to sigma F and blocks its ability to form an RNA polymerase holoenzyme (E-sigma F). Phosphorylates SpoIIAA on a serine residue. This phosphorylation may enable SpoIIAA to act as an anti-anti-sigma factor that counteracts SpoIIAB and thus releases sigma F from inhibition.</text>
</comment>
<comment type="catalytic activity">
    <reaction evidence="1">
        <text>L-seryl-[protein] + ATP = O-phospho-L-seryl-[protein] + ADP + H(+)</text>
        <dbReference type="Rhea" id="RHEA:17989"/>
        <dbReference type="Rhea" id="RHEA-COMP:9863"/>
        <dbReference type="Rhea" id="RHEA-COMP:11604"/>
        <dbReference type="ChEBI" id="CHEBI:15378"/>
        <dbReference type="ChEBI" id="CHEBI:29999"/>
        <dbReference type="ChEBI" id="CHEBI:30616"/>
        <dbReference type="ChEBI" id="CHEBI:83421"/>
        <dbReference type="ChEBI" id="CHEBI:456216"/>
        <dbReference type="EC" id="2.7.11.1"/>
    </reaction>
</comment>
<comment type="catalytic activity">
    <reaction evidence="1">
        <text>L-threonyl-[protein] + ATP = O-phospho-L-threonyl-[protein] + ADP + H(+)</text>
        <dbReference type="Rhea" id="RHEA:46608"/>
        <dbReference type="Rhea" id="RHEA-COMP:11060"/>
        <dbReference type="Rhea" id="RHEA-COMP:11605"/>
        <dbReference type="ChEBI" id="CHEBI:15378"/>
        <dbReference type="ChEBI" id="CHEBI:30013"/>
        <dbReference type="ChEBI" id="CHEBI:30616"/>
        <dbReference type="ChEBI" id="CHEBI:61977"/>
        <dbReference type="ChEBI" id="CHEBI:456216"/>
        <dbReference type="EC" id="2.7.11.1"/>
    </reaction>
</comment>
<comment type="similarity">
    <text evidence="1">Belongs to the anti-sigma-factor family.</text>
</comment>
<accession>P70878</accession>
<sequence>MKNKMQLQFTARSRNESFARVRVAAFVAQLDPTLDELTGNQTVVSEAVTNAIIHGYEENPDGMVYVSAAICDDGTVEITVRDEGKGIADIEEARQPSFTTKPELERAGMGFTIMENFMDDVEIQSQQESGTIIRLKKHLALKNALCN</sequence>
<reference key="1">
    <citation type="journal article" date="1996" name="Gene">
        <title>Nucleotide sequence of the Bacillus coagulans homologue of the spoIIA operon of Bacillus subtilis.</title>
        <authorList>
            <person name="Park S.G."/>
            <person name="Yudkin M.D."/>
        </authorList>
    </citation>
    <scope>NUCLEOTIDE SEQUENCE [GENOMIC DNA]</scope>
    <source>
        <strain>ATCC 7050 / DSM 1 / JCM 2257 / CCUG 7417 / NBRC 12583 / NCIMB 9365 / NCTC 10334 / NRS 609</strain>
    </source>
</reference>
<evidence type="ECO:0000255" key="1">
    <source>
        <dbReference type="HAMAP-Rule" id="MF_00637"/>
    </source>
</evidence>
<feature type="chain" id="PRO_0000203550" description="Anti-sigma F factor">
    <location>
        <begin position="1"/>
        <end position="147"/>
    </location>
</feature>
<dbReference type="EC" id="2.7.11.1" evidence="1"/>
<dbReference type="EMBL" id="Z54161">
    <property type="protein sequence ID" value="CAA90873.1"/>
    <property type="molecule type" value="Genomic_DNA"/>
</dbReference>
<dbReference type="PIR" id="JC5189">
    <property type="entry name" value="JC5189"/>
</dbReference>
<dbReference type="SMR" id="P70878"/>
<dbReference type="STRING" id="1398.AB434_3356"/>
<dbReference type="GO" id="GO:0005524">
    <property type="term" value="F:ATP binding"/>
    <property type="evidence" value="ECO:0007669"/>
    <property type="project" value="UniProtKB-KW"/>
</dbReference>
<dbReference type="GO" id="GO:0106310">
    <property type="term" value="F:protein serine kinase activity"/>
    <property type="evidence" value="ECO:0007669"/>
    <property type="project" value="RHEA"/>
</dbReference>
<dbReference type="GO" id="GO:0004674">
    <property type="term" value="F:protein serine/threonine kinase activity"/>
    <property type="evidence" value="ECO:0007669"/>
    <property type="project" value="UniProtKB-KW"/>
</dbReference>
<dbReference type="GO" id="GO:0016989">
    <property type="term" value="F:sigma factor antagonist activity"/>
    <property type="evidence" value="ECO:0007669"/>
    <property type="project" value="InterPro"/>
</dbReference>
<dbReference type="GO" id="GO:0030436">
    <property type="term" value="P:asexual sporulation"/>
    <property type="evidence" value="ECO:0007669"/>
    <property type="project" value="UniProtKB-UniRule"/>
</dbReference>
<dbReference type="GO" id="GO:0042174">
    <property type="term" value="P:negative regulation of sporulation resulting in formation of a cellular spore"/>
    <property type="evidence" value="ECO:0007669"/>
    <property type="project" value="InterPro"/>
</dbReference>
<dbReference type="GO" id="GO:0030435">
    <property type="term" value="P:sporulation resulting in formation of a cellular spore"/>
    <property type="evidence" value="ECO:0007669"/>
    <property type="project" value="UniProtKB-KW"/>
</dbReference>
<dbReference type="Gene3D" id="3.30.565.10">
    <property type="entry name" value="Histidine kinase-like ATPase, C-terminal domain"/>
    <property type="match status" value="1"/>
</dbReference>
<dbReference type="HAMAP" id="MF_00637">
    <property type="entry name" value="Anti_sigma_F"/>
    <property type="match status" value="1"/>
</dbReference>
<dbReference type="InterPro" id="IPR050267">
    <property type="entry name" value="Anti-sigma-factor_SerPK"/>
</dbReference>
<dbReference type="InterPro" id="IPR010194">
    <property type="entry name" value="Anti-sigma_F"/>
</dbReference>
<dbReference type="InterPro" id="IPR036890">
    <property type="entry name" value="HATPase_C_sf"/>
</dbReference>
<dbReference type="NCBIfam" id="TIGR01925">
    <property type="entry name" value="spIIAB"/>
    <property type="match status" value="1"/>
</dbReference>
<dbReference type="PANTHER" id="PTHR35526:SF3">
    <property type="entry name" value="ANTI-SIGMA-F FACTOR RSBW"/>
    <property type="match status" value="1"/>
</dbReference>
<dbReference type="PANTHER" id="PTHR35526">
    <property type="entry name" value="ANTI-SIGMA-F FACTOR RSBW-RELATED"/>
    <property type="match status" value="1"/>
</dbReference>
<dbReference type="Pfam" id="PF13581">
    <property type="entry name" value="HATPase_c_2"/>
    <property type="match status" value="1"/>
</dbReference>
<dbReference type="SMART" id="SM00387">
    <property type="entry name" value="HATPase_c"/>
    <property type="match status" value="1"/>
</dbReference>
<dbReference type="SUPFAM" id="SSF55874">
    <property type="entry name" value="ATPase domain of HSP90 chaperone/DNA topoisomerase II/histidine kinase"/>
    <property type="match status" value="1"/>
</dbReference>
<proteinExistence type="inferred from homology"/>
<organism>
    <name type="scientific">Heyndrickxia coagulans</name>
    <name type="common">Weizmannia coagulans</name>
    <dbReference type="NCBI Taxonomy" id="1398"/>
    <lineage>
        <taxon>Bacteria</taxon>
        <taxon>Bacillati</taxon>
        <taxon>Bacillota</taxon>
        <taxon>Bacilli</taxon>
        <taxon>Bacillales</taxon>
        <taxon>Bacillaceae</taxon>
        <taxon>Heyndrickxia</taxon>
    </lineage>
</organism>
<gene>
    <name evidence="1" type="primary">spoIIAB</name>
</gene>
<name>SP2AB_HEYCO</name>
<protein>
    <recommendedName>
        <fullName evidence="1">Anti-sigma F factor</fullName>
        <ecNumber evidence="1">2.7.11.1</ecNumber>
    </recommendedName>
    <alternativeName>
        <fullName evidence="1">Stage II sporulation protein AB</fullName>
    </alternativeName>
</protein>